<organism>
    <name type="scientific">Oryza sativa subsp. japonica</name>
    <name type="common">Rice</name>
    <dbReference type="NCBI Taxonomy" id="39947"/>
    <lineage>
        <taxon>Eukaryota</taxon>
        <taxon>Viridiplantae</taxon>
        <taxon>Streptophyta</taxon>
        <taxon>Embryophyta</taxon>
        <taxon>Tracheophyta</taxon>
        <taxon>Spermatophyta</taxon>
        <taxon>Magnoliopsida</taxon>
        <taxon>Liliopsida</taxon>
        <taxon>Poales</taxon>
        <taxon>Poaceae</taxon>
        <taxon>BOP clade</taxon>
        <taxon>Oryzoideae</taxon>
        <taxon>Oryzeae</taxon>
        <taxon>Oryzinae</taxon>
        <taxon>Oryza</taxon>
        <taxon>Oryza sativa</taxon>
    </lineage>
</organism>
<keyword id="KW-0251">Elongation factor</keyword>
<keyword id="KW-0648">Protein biosynthesis</keyword>
<keyword id="KW-1185">Reference proteome</keyword>
<accession>Q5Z627</accession>
<accession>Q0DBE3</accession>
<accession>Q84PB9</accession>
<reference key="1">
    <citation type="journal article" date="2005" name="Nature">
        <title>The map-based sequence of the rice genome.</title>
        <authorList>
            <consortium name="International rice genome sequencing project (IRGSP)"/>
        </authorList>
    </citation>
    <scope>NUCLEOTIDE SEQUENCE [LARGE SCALE GENOMIC DNA]</scope>
    <source>
        <strain>cv. Nipponbare</strain>
    </source>
</reference>
<reference key="2">
    <citation type="journal article" date="2008" name="Nucleic Acids Res.">
        <title>The rice annotation project database (RAP-DB): 2008 update.</title>
        <authorList>
            <consortium name="The rice annotation project (RAP)"/>
        </authorList>
    </citation>
    <scope>GENOME REANNOTATION</scope>
    <source>
        <strain>cv. Nipponbare</strain>
    </source>
</reference>
<reference key="3">
    <citation type="journal article" date="2013" name="Rice">
        <title>Improvement of the Oryza sativa Nipponbare reference genome using next generation sequence and optical map data.</title>
        <authorList>
            <person name="Kawahara Y."/>
            <person name="de la Bastide M."/>
            <person name="Hamilton J.P."/>
            <person name="Kanamori H."/>
            <person name="McCombie W.R."/>
            <person name="Ouyang S."/>
            <person name="Schwartz D.C."/>
            <person name="Tanaka T."/>
            <person name="Wu J."/>
            <person name="Zhou S."/>
            <person name="Childs K.L."/>
            <person name="Davidson R.M."/>
            <person name="Lin H."/>
            <person name="Quesada-Ocampo L."/>
            <person name="Vaillancourt B."/>
            <person name="Sakai H."/>
            <person name="Lee S.S."/>
            <person name="Kim J."/>
            <person name="Numa H."/>
            <person name="Itoh T."/>
            <person name="Buell C.R."/>
            <person name="Matsumoto T."/>
        </authorList>
    </citation>
    <scope>GENOME REANNOTATION</scope>
    <source>
        <strain>cv. Nipponbare</strain>
    </source>
</reference>
<reference key="4">
    <citation type="journal article" date="2003" name="Science">
        <title>Collection, mapping, and annotation of over 28,000 cDNA clones from japonica rice.</title>
        <authorList>
            <consortium name="The rice full-length cDNA consortium"/>
        </authorList>
    </citation>
    <scope>NUCLEOTIDE SEQUENCE [LARGE SCALE MRNA]</scope>
    <source>
        <strain>cv. Nipponbare</strain>
    </source>
</reference>
<reference key="5">
    <citation type="journal article" date="2003" name="Proc. Natl. Acad. Sci. U.S.A.">
        <title>A network of rice genes associated with stress response and seed development.</title>
        <authorList>
            <person name="Cooper B."/>
            <person name="Clarke J.D."/>
            <person name="Budworth P."/>
            <person name="Kreps J."/>
            <person name="Hutchison D."/>
            <person name="Park S."/>
            <person name="Guimil S."/>
            <person name="Dunn M."/>
            <person name="Luginbuehl P."/>
            <person name="Ellero C."/>
            <person name="Goff S.A."/>
            <person name="Glazebrook J."/>
        </authorList>
    </citation>
    <scope>NUCLEOTIDE SEQUENCE [MRNA] OF 4-416</scope>
    <source>
        <strain>cv. Nipponbare</strain>
    </source>
</reference>
<name>EF1G3_ORYSJ</name>
<comment type="function">
    <text evidence="1">Probably plays a role in anchoring the complex to other cellular components.</text>
</comment>
<comment type="subunit">
    <text>EF-1 is composed of four subunits: alpha, beta, delta, and gamma.</text>
</comment>
<protein>
    <recommendedName>
        <fullName>Elongation factor 1-gamma 3</fullName>
        <shortName>EF-1-gamma 3</shortName>
    </recommendedName>
    <alternativeName>
        <fullName>eEF-1B gamma 3</fullName>
    </alternativeName>
</protein>
<sequence>MALVLHCGSGNKNAFKALIAAEYTGVKVELTKNFEMGVSNKTPEFLKMNPLGKIPVLETPEGAVFESNAIARYVARLKDNSSLCGSSLIDYSHIEQWMDFSATEVDANIGRWLYPRLGFGPYVPVLEEFAITSLKRSLGALNTHLASNTYLVGHSVTLADIVMTCNLYYGFVRILIKSFTSEFPHVERYFWTMVNQPNFKKVIGDFKQAESVPPVQKKAAPPKESKAKEAKKEAPKEAPKPKVEASEEEEAPKPKPKNPLDLLPPSKMILDEWKRLYSNTKTNFREIAIKGFWDMYDPEGYSLWFCDYKYNDENTVSFVTMNKVGGFLQRMDLCRKYAFGKMLVIGSTPPFKVKGLWLFRGQDIPKFVMDEVYDMELYEWTKVDLSDEAQKERVNAMIEDQEPFEGEDLLDAKCFK</sequence>
<proteinExistence type="evidence at transcript level"/>
<dbReference type="EMBL" id="AP004729">
    <property type="protein sequence ID" value="BAD61828.1"/>
    <property type="molecule type" value="Genomic_DNA"/>
</dbReference>
<dbReference type="EMBL" id="AP005460">
    <property type="protein sequence ID" value="BAD61932.1"/>
    <property type="molecule type" value="Genomic_DNA"/>
</dbReference>
<dbReference type="EMBL" id="AP008212">
    <property type="protein sequence ID" value="BAF19830.1"/>
    <property type="molecule type" value="Genomic_DNA"/>
</dbReference>
<dbReference type="EMBL" id="AP014962">
    <property type="protein sequence ID" value="BAS98320.1"/>
    <property type="molecule type" value="Genomic_DNA"/>
</dbReference>
<dbReference type="EMBL" id="AK068226">
    <property type="protein sequence ID" value="BAG90811.1"/>
    <property type="molecule type" value="mRNA"/>
</dbReference>
<dbReference type="EMBL" id="AK103928">
    <property type="protein sequence ID" value="BAG96325.1"/>
    <property type="molecule type" value="mRNA"/>
</dbReference>
<dbReference type="EMBL" id="AY224444">
    <property type="protein sequence ID" value="AAO72563.1"/>
    <property type="molecule type" value="mRNA"/>
</dbReference>
<dbReference type="RefSeq" id="XP_015643925.1">
    <property type="nucleotide sequence ID" value="XM_015788439.1"/>
</dbReference>
<dbReference type="SMR" id="Q5Z627"/>
<dbReference type="FunCoup" id="Q5Z627">
    <property type="interactions" value="2676"/>
</dbReference>
<dbReference type="IntAct" id="Q5Z627">
    <property type="interactions" value="2"/>
</dbReference>
<dbReference type="STRING" id="39947.Q5Z627"/>
<dbReference type="PaxDb" id="39947-Q5Z627"/>
<dbReference type="EnsemblPlants" id="Os06t0571400-01">
    <property type="protein sequence ID" value="Os06t0571400-01"/>
    <property type="gene ID" value="Os06g0571400"/>
</dbReference>
<dbReference type="EnsemblPlants" id="Os06t0571400-02">
    <property type="protein sequence ID" value="Os06t0571400-02"/>
    <property type="gene ID" value="Os06g0571400"/>
</dbReference>
<dbReference type="Gramene" id="Os06t0571400-01">
    <property type="protein sequence ID" value="Os06t0571400-01"/>
    <property type="gene ID" value="Os06g0571400"/>
</dbReference>
<dbReference type="Gramene" id="Os06t0571400-02">
    <property type="protein sequence ID" value="Os06t0571400-02"/>
    <property type="gene ID" value="Os06g0571400"/>
</dbReference>
<dbReference type="KEGG" id="dosa:Os06g0571400"/>
<dbReference type="eggNOG" id="KOG0867">
    <property type="taxonomic scope" value="Eukaryota"/>
</dbReference>
<dbReference type="eggNOG" id="KOG1627">
    <property type="taxonomic scope" value="Eukaryota"/>
</dbReference>
<dbReference type="HOGENOM" id="CLU_011226_3_0_1"/>
<dbReference type="InParanoid" id="Q5Z627"/>
<dbReference type="OMA" id="VQWATEN"/>
<dbReference type="OrthoDB" id="249703at2759"/>
<dbReference type="Proteomes" id="UP000000763">
    <property type="component" value="Chromosome 6"/>
</dbReference>
<dbReference type="Proteomes" id="UP000059680">
    <property type="component" value="Chromosome 6"/>
</dbReference>
<dbReference type="GO" id="GO:0004364">
    <property type="term" value="F:glutathione transferase activity"/>
    <property type="evidence" value="ECO:0007669"/>
    <property type="project" value="InterPro"/>
</dbReference>
<dbReference type="GO" id="GO:0003746">
    <property type="term" value="F:translation elongation factor activity"/>
    <property type="evidence" value="ECO:0007669"/>
    <property type="project" value="UniProtKB-KW"/>
</dbReference>
<dbReference type="CDD" id="cd03181">
    <property type="entry name" value="GST_C_EF1Bgamma_like"/>
    <property type="match status" value="1"/>
</dbReference>
<dbReference type="CDD" id="cd03044">
    <property type="entry name" value="GST_N_EF1Bgamma"/>
    <property type="match status" value="1"/>
</dbReference>
<dbReference type="FunFam" id="1.20.1050.10:FF:000006">
    <property type="entry name" value="Elongation factor 1 gamma"/>
    <property type="match status" value="1"/>
</dbReference>
<dbReference type="FunFam" id="3.30.70.1010:FF:000001">
    <property type="entry name" value="Elongation factor 1-gamma 1"/>
    <property type="match status" value="1"/>
</dbReference>
<dbReference type="FunFam" id="3.40.30.10:FF:000148">
    <property type="entry name" value="Elongation factor 1B gamma"/>
    <property type="match status" value="1"/>
</dbReference>
<dbReference type="Gene3D" id="1.20.1050.10">
    <property type="match status" value="1"/>
</dbReference>
<dbReference type="Gene3D" id="3.40.30.10">
    <property type="entry name" value="Glutaredoxin"/>
    <property type="match status" value="1"/>
</dbReference>
<dbReference type="Gene3D" id="3.30.70.1010">
    <property type="entry name" value="Translation elongation factor EF1B, gamma chain, conserved domain"/>
    <property type="match status" value="1"/>
</dbReference>
<dbReference type="InterPro" id="IPR044628">
    <property type="entry name" value="EF-1-gamma_plant"/>
</dbReference>
<dbReference type="InterPro" id="IPR001662">
    <property type="entry name" value="EF1B_G_C"/>
</dbReference>
<dbReference type="InterPro" id="IPR036433">
    <property type="entry name" value="EF1B_G_C_sf"/>
</dbReference>
<dbReference type="InterPro" id="IPR010987">
    <property type="entry name" value="Glutathione-S-Trfase_C-like"/>
</dbReference>
<dbReference type="InterPro" id="IPR036282">
    <property type="entry name" value="Glutathione-S-Trfase_C_sf"/>
</dbReference>
<dbReference type="InterPro" id="IPR040079">
    <property type="entry name" value="Glutathione_S-Trfase"/>
</dbReference>
<dbReference type="InterPro" id="IPR004045">
    <property type="entry name" value="Glutathione_S-Trfase_N"/>
</dbReference>
<dbReference type="InterPro" id="IPR004046">
    <property type="entry name" value="GST_C"/>
</dbReference>
<dbReference type="InterPro" id="IPR036249">
    <property type="entry name" value="Thioredoxin-like_sf"/>
</dbReference>
<dbReference type="PANTHER" id="PTHR44372">
    <property type="entry name" value="ELONGATION FACTOR 1-GAMMA 1-RELATED"/>
    <property type="match status" value="1"/>
</dbReference>
<dbReference type="PANTHER" id="PTHR44372:SF1">
    <property type="entry name" value="ELONGATION FACTOR 1-GAMMA 3"/>
    <property type="match status" value="1"/>
</dbReference>
<dbReference type="Pfam" id="PF00647">
    <property type="entry name" value="EF1G"/>
    <property type="match status" value="1"/>
</dbReference>
<dbReference type="Pfam" id="PF00043">
    <property type="entry name" value="GST_C"/>
    <property type="match status" value="1"/>
</dbReference>
<dbReference type="Pfam" id="PF02798">
    <property type="entry name" value="GST_N"/>
    <property type="match status" value="1"/>
</dbReference>
<dbReference type="SFLD" id="SFLDS00019">
    <property type="entry name" value="Glutathione_Transferase_(cytos"/>
    <property type="match status" value="1"/>
</dbReference>
<dbReference type="SFLD" id="SFLDG00358">
    <property type="entry name" value="Main_(cytGST)"/>
    <property type="match status" value="1"/>
</dbReference>
<dbReference type="SMART" id="SM01183">
    <property type="entry name" value="EF1G"/>
    <property type="match status" value="1"/>
</dbReference>
<dbReference type="SUPFAM" id="SSF89942">
    <property type="entry name" value="eEF1-gamma domain"/>
    <property type="match status" value="1"/>
</dbReference>
<dbReference type="SUPFAM" id="SSF47616">
    <property type="entry name" value="GST C-terminal domain-like"/>
    <property type="match status" value="1"/>
</dbReference>
<dbReference type="SUPFAM" id="SSF52833">
    <property type="entry name" value="Thioredoxin-like"/>
    <property type="match status" value="1"/>
</dbReference>
<dbReference type="PROSITE" id="PS50040">
    <property type="entry name" value="EF1G_C"/>
    <property type="match status" value="1"/>
</dbReference>
<dbReference type="PROSITE" id="PS50405">
    <property type="entry name" value="GST_CTER"/>
    <property type="match status" value="1"/>
</dbReference>
<dbReference type="PROSITE" id="PS50404">
    <property type="entry name" value="GST_NTER"/>
    <property type="match status" value="1"/>
</dbReference>
<feature type="chain" id="PRO_0000228124" description="Elongation factor 1-gamma 3">
    <location>
        <begin position="1"/>
        <end position="416"/>
    </location>
</feature>
<feature type="domain" description="GST N-terminal">
    <location>
        <begin position="1"/>
        <end position="82"/>
    </location>
</feature>
<feature type="domain" description="GST C-terminal">
    <location>
        <begin position="87"/>
        <end position="215"/>
    </location>
</feature>
<feature type="domain" description="EF-1-gamma C-terminal" evidence="2">
    <location>
        <begin position="256"/>
        <end position="416"/>
    </location>
</feature>
<feature type="region of interest" description="Disordered" evidence="3">
    <location>
        <begin position="213"/>
        <end position="263"/>
    </location>
</feature>
<feature type="compositionally biased region" description="Basic and acidic residues" evidence="3">
    <location>
        <begin position="221"/>
        <end position="245"/>
    </location>
</feature>
<evidence type="ECO:0000250" key="1"/>
<evidence type="ECO:0000255" key="2">
    <source>
        <dbReference type="PROSITE-ProRule" id="PRU00519"/>
    </source>
</evidence>
<evidence type="ECO:0000256" key="3">
    <source>
        <dbReference type="SAM" id="MobiDB-lite"/>
    </source>
</evidence>
<gene>
    <name type="ordered locus">Os06g0571400</name>
    <name type="ordered locus">LOC_Os06g37440</name>
    <name type="ORF">OSJNBa0006A22.2</name>
    <name type="ORF">P0610D01.10</name>
</gene>